<name>FBK24_ARATH</name>
<proteinExistence type="predicted"/>
<reference key="1">
    <citation type="journal article" date="2000" name="Nature">
        <title>Sequence and analysis of chromosome 1 of the plant Arabidopsis thaliana.</title>
        <authorList>
            <person name="Theologis A."/>
            <person name="Ecker J.R."/>
            <person name="Palm C.J."/>
            <person name="Federspiel N.A."/>
            <person name="Kaul S."/>
            <person name="White O."/>
            <person name="Alonso J."/>
            <person name="Altafi H."/>
            <person name="Araujo R."/>
            <person name="Bowman C.L."/>
            <person name="Brooks S.Y."/>
            <person name="Buehler E."/>
            <person name="Chan A."/>
            <person name="Chao Q."/>
            <person name="Chen H."/>
            <person name="Cheuk R.F."/>
            <person name="Chin C.W."/>
            <person name="Chung M.K."/>
            <person name="Conn L."/>
            <person name="Conway A.B."/>
            <person name="Conway A.R."/>
            <person name="Creasy T.H."/>
            <person name="Dewar K."/>
            <person name="Dunn P."/>
            <person name="Etgu P."/>
            <person name="Feldblyum T.V."/>
            <person name="Feng J.-D."/>
            <person name="Fong B."/>
            <person name="Fujii C.Y."/>
            <person name="Gill J.E."/>
            <person name="Goldsmith A.D."/>
            <person name="Haas B."/>
            <person name="Hansen N.F."/>
            <person name="Hughes B."/>
            <person name="Huizar L."/>
            <person name="Hunter J.L."/>
            <person name="Jenkins J."/>
            <person name="Johnson-Hopson C."/>
            <person name="Khan S."/>
            <person name="Khaykin E."/>
            <person name="Kim C.J."/>
            <person name="Koo H.L."/>
            <person name="Kremenetskaia I."/>
            <person name="Kurtz D.B."/>
            <person name="Kwan A."/>
            <person name="Lam B."/>
            <person name="Langin-Hooper S."/>
            <person name="Lee A."/>
            <person name="Lee J.M."/>
            <person name="Lenz C.A."/>
            <person name="Li J.H."/>
            <person name="Li Y.-P."/>
            <person name="Lin X."/>
            <person name="Liu S.X."/>
            <person name="Liu Z.A."/>
            <person name="Luros J.S."/>
            <person name="Maiti R."/>
            <person name="Marziali A."/>
            <person name="Militscher J."/>
            <person name="Miranda M."/>
            <person name="Nguyen M."/>
            <person name="Nierman W.C."/>
            <person name="Osborne B.I."/>
            <person name="Pai G."/>
            <person name="Peterson J."/>
            <person name="Pham P.K."/>
            <person name="Rizzo M."/>
            <person name="Rooney T."/>
            <person name="Rowley D."/>
            <person name="Sakano H."/>
            <person name="Salzberg S.L."/>
            <person name="Schwartz J.R."/>
            <person name="Shinn P."/>
            <person name="Southwick A.M."/>
            <person name="Sun H."/>
            <person name="Tallon L.J."/>
            <person name="Tambunga G."/>
            <person name="Toriumi M.J."/>
            <person name="Town C.D."/>
            <person name="Utterback T."/>
            <person name="Van Aken S."/>
            <person name="Vaysberg M."/>
            <person name="Vysotskaia V.S."/>
            <person name="Walker M."/>
            <person name="Wu D."/>
            <person name="Yu G."/>
            <person name="Fraser C.M."/>
            <person name="Venter J.C."/>
            <person name="Davis R.W."/>
        </authorList>
    </citation>
    <scope>NUCLEOTIDE SEQUENCE [LARGE SCALE GENOMIC DNA]</scope>
    <source>
        <strain>cv. Columbia</strain>
    </source>
</reference>
<reference key="2">
    <citation type="journal article" date="2017" name="Plant J.">
        <title>Araport11: a complete reannotation of the Arabidopsis thaliana reference genome.</title>
        <authorList>
            <person name="Cheng C.Y."/>
            <person name="Krishnakumar V."/>
            <person name="Chan A.P."/>
            <person name="Thibaud-Nissen F."/>
            <person name="Schobel S."/>
            <person name="Town C.D."/>
        </authorList>
    </citation>
    <scope>GENOME REANNOTATION</scope>
    <source>
        <strain>cv. Columbia</strain>
    </source>
</reference>
<organism>
    <name type="scientific">Arabidopsis thaliana</name>
    <name type="common">Mouse-ear cress</name>
    <dbReference type="NCBI Taxonomy" id="3702"/>
    <lineage>
        <taxon>Eukaryota</taxon>
        <taxon>Viridiplantae</taxon>
        <taxon>Streptophyta</taxon>
        <taxon>Embryophyta</taxon>
        <taxon>Tracheophyta</taxon>
        <taxon>Spermatophyta</taxon>
        <taxon>Magnoliopsida</taxon>
        <taxon>eudicotyledons</taxon>
        <taxon>Gunneridae</taxon>
        <taxon>Pentapetalae</taxon>
        <taxon>rosids</taxon>
        <taxon>malvids</taxon>
        <taxon>Brassicales</taxon>
        <taxon>Brassicaceae</taxon>
        <taxon>Camelineae</taxon>
        <taxon>Arabidopsis</taxon>
    </lineage>
</organism>
<feature type="chain" id="PRO_0000283184" description="Putative F-box/kelch-repeat protein At1g60570">
    <location>
        <begin position="1"/>
        <end position="381"/>
    </location>
</feature>
<feature type="domain" description="F-box" evidence="1">
    <location>
        <begin position="19"/>
        <end position="65"/>
    </location>
</feature>
<feature type="repeat" description="Kelch 1">
    <location>
        <begin position="126"/>
        <end position="169"/>
    </location>
</feature>
<feature type="repeat" description="Kelch 2">
    <location>
        <begin position="171"/>
        <end position="218"/>
    </location>
</feature>
<feature type="repeat" description="Kelch 3">
    <location>
        <begin position="220"/>
        <end position="266"/>
    </location>
</feature>
<feature type="repeat" description="Kelch 4">
    <location>
        <begin position="269"/>
        <end position="314"/>
    </location>
</feature>
<protein>
    <recommendedName>
        <fullName>Putative F-box/kelch-repeat protein At1g60570</fullName>
    </recommendedName>
</protein>
<evidence type="ECO:0000255" key="1">
    <source>
        <dbReference type="PROSITE-ProRule" id="PRU00080"/>
    </source>
</evidence>
<sequence length="381" mass="43956">MSDDEEPPLKKNKLPVEEPTLIPSLPEELILSILARVSRLSYRSLSLVCKRFHSLLTSGEIYRFRSLSGYTENCLYVCLRFSHTGRSHRWFMLREKNKSSGYVLAPIPISHSPSLHASSIVAVGSKIYKIGGVMDGSSVSILDCWSHRWLEAPSMQMERDRPSANLIDGKIYVTGGCHRGSYNPSKWMEVFDLKTETWEPVLCRSDRLTFESYHERTNNLLVDGKLYIFWADKGVVYNPKDDTWDSLEVPEMDMCLTLFYCCVIENVLYDFFYEELDIKWYDTKARTWRSLLNGMRELHKFVRHASVTLADYGGKMVMFWDKFVASGDGLGFHKTMMWCAMIALERSDSGEIWGKVEWFGPVLPNQIPLEYAFEYVGSVKV</sequence>
<keyword id="KW-0880">Kelch repeat</keyword>
<keyword id="KW-1185">Reference proteome</keyword>
<keyword id="KW-0677">Repeat</keyword>
<accession>O22698</accession>
<dbReference type="EMBL" id="AC002292">
    <property type="protein sequence ID" value="AAB71958.1"/>
    <property type="molecule type" value="Genomic_DNA"/>
</dbReference>
<dbReference type="EMBL" id="CP002684">
    <property type="protein sequence ID" value="AEE33699.1"/>
    <property type="molecule type" value="Genomic_DNA"/>
</dbReference>
<dbReference type="PIR" id="A96631">
    <property type="entry name" value="A96631"/>
</dbReference>
<dbReference type="RefSeq" id="NP_176257.1">
    <property type="nucleotide sequence ID" value="NM_104741.1"/>
</dbReference>
<dbReference type="SMR" id="O22698"/>
<dbReference type="BioGRID" id="27576">
    <property type="interactions" value="3"/>
</dbReference>
<dbReference type="STRING" id="3702.O22698"/>
<dbReference type="PaxDb" id="3702-AT1G60570.1"/>
<dbReference type="EnsemblPlants" id="AT1G60570.1">
    <property type="protein sequence ID" value="AT1G60570.1"/>
    <property type="gene ID" value="AT1G60570"/>
</dbReference>
<dbReference type="GeneID" id="842352"/>
<dbReference type="Gramene" id="AT1G60570.1">
    <property type="protein sequence ID" value="AT1G60570.1"/>
    <property type="gene ID" value="AT1G60570"/>
</dbReference>
<dbReference type="KEGG" id="ath:AT1G60570"/>
<dbReference type="Araport" id="AT1G60570"/>
<dbReference type="TAIR" id="AT1G60570"/>
<dbReference type="eggNOG" id="KOG1072">
    <property type="taxonomic scope" value="Eukaryota"/>
</dbReference>
<dbReference type="HOGENOM" id="CLU_032521_1_2_1"/>
<dbReference type="InParanoid" id="O22698"/>
<dbReference type="OMA" id="NASHYME"/>
<dbReference type="PhylomeDB" id="O22698"/>
<dbReference type="PRO" id="PR:O22698"/>
<dbReference type="Proteomes" id="UP000006548">
    <property type="component" value="Chromosome 1"/>
</dbReference>
<dbReference type="ExpressionAtlas" id="O22698">
    <property type="expression patterns" value="baseline and differential"/>
</dbReference>
<dbReference type="CDD" id="cd22152">
    <property type="entry name" value="F-box_AtAFR-like"/>
    <property type="match status" value="1"/>
</dbReference>
<dbReference type="Gene3D" id="1.20.1280.50">
    <property type="match status" value="1"/>
</dbReference>
<dbReference type="Gene3D" id="2.120.10.80">
    <property type="entry name" value="Kelch-type beta propeller"/>
    <property type="match status" value="1"/>
</dbReference>
<dbReference type="InterPro" id="IPR036047">
    <property type="entry name" value="F-box-like_dom_sf"/>
</dbReference>
<dbReference type="InterPro" id="IPR050354">
    <property type="entry name" value="F-box/kelch-repeat_ARATH"/>
</dbReference>
<dbReference type="InterPro" id="IPR001810">
    <property type="entry name" value="F-box_dom"/>
</dbReference>
<dbReference type="InterPro" id="IPR015915">
    <property type="entry name" value="Kelch-typ_b-propeller"/>
</dbReference>
<dbReference type="PANTHER" id="PTHR24414">
    <property type="entry name" value="F-BOX/KELCH-REPEAT PROTEIN SKIP4"/>
    <property type="match status" value="1"/>
</dbReference>
<dbReference type="PANTHER" id="PTHR24414:SF184">
    <property type="entry name" value="GALACTOSE OXIDASE_KELCH REPEAT SUPERFAMILY PROTEIN"/>
    <property type="match status" value="1"/>
</dbReference>
<dbReference type="Pfam" id="PF00646">
    <property type="entry name" value="F-box"/>
    <property type="match status" value="1"/>
</dbReference>
<dbReference type="Pfam" id="PF25210">
    <property type="entry name" value="Kelch_FKB95"/>
    <property type="match status" value="1"/>
</dbReference>
<dbReference type="SMART" id="SM00256">
    <property type="entry name" value="FBOX"/>
    <property type="match status" value="1"/>
</dbReference>
<dbReference type="SUPFAM" id="SSF81383">
    <property type="entry name" value="F-box domain"/>
    <property type="match status" value="1"/>
</dbReference>
<dbReference type="SUPFAM" id="SSF117281">
    <property type="entry name" value="Kelch motif"/>
    <property type="match status" value="1"/>
</dbReference>
<dbReference type="PROSITE" id="PS50181">
    <property type="entry name" value="FBOX"/>
    <property type="match status" value="1"/>
</dbReference>
<gene>
    <name type="ordered locus">At1g60570</name>
    <name type="ORF">F8A5.11</name>
</gene>